<protein>
    <recommendedName>
        <fullName evidence="1">Homoserine O-succinyltransferase</fullName>
        <shortName evidence="1">HST</shortName>
        <ecNumber evidence="1">2.3.1.46</ecNumber>
    </recommendedName>
    <alternativeName>
        <fullName evidence="1">Homoserine transsuccinylase</fullName>
        <shortName evidence="1">HTS</shortName>
    </alternativeName>
</protein>
<comment type="function">
    <text evidence="1">Transfers a succinyl group from succinyl-CoA to L-homoserine, forming succinyl-L-homoserine.</text>
</comment>
<comment type="catalytic activity">
    <reaction evidence="1">
        <text>L-homoserine + succinyl-CoA = O-succinyl-L-homoserine + CoA</text>
        <dbReference type="Rhea" id="RHEA:22008"/>
        <dbReference type="ChEBI" id="CHEBI:57287"/>
        <dbReference type="ChEBI" id="CHEBI:57292"/>
        <dbReference type="ChEBI" id="CHEBI:57476"/>
        <dbReference type="ChEBI" id="CHEBI:57661"/>
        <dbReference type="EC" id="2.3.1.46"/>
    </reaction>
</comment>
<comment type="pathway">
    <text evidence="1">Amino-acid biosynthesis; L-methionine biosynthesis via de novo pathway; O-succinyl-L-homoserine from L-homoserine: step 1/1.</text>
</comment>
<comment type="subunit">
    <text evidence="1">Homodimer.</text>
</comment>
<comment type="subcellular location">
    <subcellularLocation>
        <location evidence="1">Cytoplasm</location>
    </subcellularLocation>
</comment>
<comment type="similarity">
    <text evidence="1">Belongs to the AB hydrolase superfamily. MetX family.</text>
</comment>
<evidence type="ECO:0000255" key="1">
    <source>
        <dbReference type="HAMAP-Rule" id="MF_00296"/>
    </source>
</evidence>
<feature type="chain" id="PRO_0000231864" description="Homoserine O-succinyltransferase">
    <location>
        <begin position="1"/>
        <end position="381"/>
    </location>
</feature>
<feature type="domain" description="AB hydrolase-1" evidence="1">
    <location>
        <begin position="45"/>
        <end position="360"/>
    </location>
</feature>
<feature type="active site" description="Nucleophile" evidence="1">
    <location>
        <position position="151"/>
    </location>
</feature>
<feature type="active site" evidence="1">
    <location>
        <position position="321"/>
    </location>
</feature>
<feature type="active site" evidence="1">
    <location>
        <position position="354"/>
    </location>
</feature>
<feature type="binding site" evidence="1">
    <location>
        <position position="221"/>
    </location>
    <ligand>
        <name>substrate</name>
    </ligand>
</feature>
<feature type="binding site" evidence="1">
    <location>
        <position position="355"/>
    </location>
    <ligand>
        <name>substrate</name>
    </ligand>
</feature>
<feature type="site" description="Important for acyl-CoA specificity" evidence="1">
    <location>
        <position position="323"/>
    </location>
</feature>
<proteinExistence type="inferred from homology"/>
<keyword id="KW-0012">Acyltransferase</keyword>
<keyword id="KW-0028">Amino-acid biosynthesis</keyword>
<keyword id="KW-0963">Cytoplasm</keyword>
<keyword id="KW-0486">Methionine biosynthesis</keyword>
<keyword id="KW-0808">Transferase</keyword>
<accession>Q3JXB2</accession>
<reference key="1">
    <citation type="journal article" date="2010" name="Genome Biol. Evol.">
        <title>Continuing evolution of Burkholderia mallei through genome reduction and large-scale rearrangements.</title>
        <authorList>
            <person name="Losada L."/>
            <person name="Ronning C.M."/>
            <person name="DeShazer D."/>
            <person name="Woods D."/>
            <person name="Fedorova N."/>
            <person name="Kim H.S."/>
            <person name="Shabalina S.A."/>
            <person name="Pearson T.R."/>
            <person name="Brinkac L."/>
            <person name="Tan P."/>
            <person name="Nandi T."/>
            <person name="Crabtree J."/>
            <person name="Badger J."/>
            <person name="Beckstrom-Sternberg S."/>
            <person name="Saqib M."/>
            <person name="Schutzer S.E."/>
            <person name="Keim P."/>
            <person name="Nierman W.C."/>
        </authorList>
    </citation>
    <scope>NUCLEOTIDE SEQUENCE [LARGE SCALE GENOMIC DNA]</scope>
    <source>
        <strain>1710b</strain>
    </source>
</reference>
<gene>
    <name evidence="1" type="primary">metXS</name>
    <name type="ordered locus">BURPS1710b_0377</name>
</gene>
<dbReference type="EC" id="2.3.1.46" evidence="1"/>
<dbReference type="EMBL" id="CP000124">
    <property type="protein sequence ID" value="ABA50518.1"/>
    <property type="molecule type" value="Genomic_DNA"/>
</dbReference>
<dbReference type="RefSeq" id="WP_004525864.1">
    <property type="nucleotide sequence ID" value="NC_007434.1"/>
</dbReference>
<dbReference type="SMR" id="Q3JXB2"/>
<dbReference type="ESTHER" id="burma-metx">
    <property type="family name" value="Homoserine_transacetylase"/>
</dbReference>
<dbReference type="EnsemblBacteria" id="ABA50518">
    <property type="protein sequence ID" value="ABA50518"/>
    <property type="gene ID" value="BURPS1710b_0377"/>
</dbReference>
<dbReference type="KEGG" id="bpm:BURPS1710b_0377"/>
<dbReference type="HOGENOM" id="CLU_028760_1_2_4"/>
<dbReference type="UniPathway" id="UPA00051">
    <property type="reaction ID" value="UER00075"/>
</dbReference>
<dbReference type="Proteomes" id="UP000002700">
    <property type="component" value="Chromosome I"/>
</dbReference>
<dbReference type="GO" id="GO:0005737">
    <property type="term" value="C:cytoplasm"/>
    <property type="evidence" value="ECO:0007669"/>
    <property type="project" value="UniProtKB-SubCell"/>
</dbReference>
<dbReference type="GO" id="GO:0004414">
    <property type="term" value="F:homoserine O-acetyltransferase activity"/>
    <property type="evidence" value="ECO:0007669"/>
    <property type="project" value="TreeGrafter"/>
</dbReference>
<dbReference type="GO" id="GO:0008899">
    <property type="term" value="F:homoserine O-succinyltransferase activity"/>
    <property type="evidence" value="ECO:0007669"/>
    <property type="project" value="UniProtKB-UniRule"/>
</dbReference>
<dbReference type="GO" id="GO:0009092">
    <property type="term" value="P:homoserine metabolic process"/>
    <property type="evidence" value="ECO:0007669"/>
    <property type="project" value="TreeGrafter"/>
</dbReference>
<dbReference type="GO" id="GO:0009086">
    <property type="term" value="P:methionine biosynthetic process"/>
    <property type="evidence" value="ECO:0007669"/>
    <property type="project" value="UniProtKB-UniRule"/>
</dbReference>
<dbReference type="FunFam" id="1.10.1740.110:FF:000001">
    <property type="entry name" value="Homoserine O-acetyltransferase"/>
    <property type="match status" value="1"/>
</dbReference>
<dbReference type="Gene3D" id="1.10.1740.110">
    <property type="match status" value="1"/>
</dbReference>
<dbReference type="Gene3D" id="3.40.50.1820">
    <property type="entry name" value="alpha/beta hydrolase"/>
    <property type="match status" value="1"/>
</dbReference>
<dbReference type="HAMAP" id="MF_00296">
    <property type="entry name" value="MetX_acyltransf"/>
    <property type="match status" value="1"/>
</dbReference>
<dbReference type="InterPro" id="IPR000073">
    <property type="entry name" value="AB_hydrolase_1"/>
</dbReference>
<dbReference type="InterPro" id="IPR029058">
    <property type="entry name" value="AB_hydrolase_fold"/>
</dbReference>
<dbReference type="InterPro" id="IPR008220">
    <property type="entry name" value="HAT_MetX-like"/>
</dbReference>
<dbReference type="NCBIfam" id="TIGR01392">
    <property type="entry name" value="homoserO_Ac_trn"/>
    <property type="match status" value="1"/>
</dbReference>
<dbReference type="NCBIfam" id="NF001209">
    <property type="entry name" value="PRK00175.1"/>
    <property type="match status" value="1"/>
</dbReference>
<dbReference type="PANTHER" id="PTHR32268">
    <property type="entry name" value="HOMOSERINE O-ACETYLTRANSFERASE"/>
    <property type="match status" value="1"/>
</dbReference>
<dbReference type="PANTHER" id="PTHR32268:SF11">
    <property type="entry name" value="HOMOSERINE O-ACETYLTRANSFERASE"/>
    <property type="match status" value="1"/>
</dbReference>
<dbReference type="Pfam" id="PF00561">
    <property type="entry name" value="Abhydrolase_1"/>
    <property type="match status" value="1"/>
</dbReference>
<dbReference type="PIRSF" id="PIRSF000443">
    <property type="entry name" value="Homoser_Ac_trans"/>
    <property type="match status" value="1"/>
</dbReference>
<dbReference type="SUPFAM" id="SSF53474">
    <property type="entry name" value="alpha/beta-Hydrolases"/>
    <property type="match status" value="1"/>
</dbReference>
<sequence>MESIGVVAPHTMHFAEPLRLQSGSVLGNYQLVVETYGELNAVRSNAVLVCHALNASHHVAGVYADDPRSTGWWDNMVGPGKPLDTNRFFVIGVNNLGSCFGSTGPMNIDPATGTPYGARFPVVTVEDWVHAQARVADALGIERFAAVMGGSLGGMQALAWSLLYPERVAHCIDIASTPKLSAQNIAFNEVARSAILSDPDFHGGDYYAHGVKPRRGLRVARMIGHITYLSDDDMAEKFGRALRRADGALDAYNFNFDVEFEVESYLRYQGDKFADYFDANTYLLITRALDYFDPAKAFNGDLSAALAHTKAKYLIASFMTDWRFAPARSREIVKALLDNRRSVSYAEIDAPHGHDAFLLDDARYHNLVRAYYERIAEEVGA</sequence>
<name>METXS_BURP1</name>
<organism>
    <name type="scientific">Burkholderia pseudomallei (strain 1710b)</name>
    <dbReference type="NCBI Taxonomy" id="320372"/>
    <lineage>
        <taxon>Bacteria</taxon>
        <taxon>Pseudomonadati</taxon>
        <taxon>Pseudomonadota</taxon>
        <taxon>Betaproteobacteria</taxon>
        <taxon>Burkholderiales</taxon>
        <taxon>Burkholderiaceae</taxon>
        <taxon>Burkholderia</taxon>
        <taxon>pseudomallei group</taxon>
    </lineage>
</organism>